<name>SKI10_MOUSE</name>
<keyword id="KW-1015">Disulfide bond</keyword>
<keyword id="KW-0325">Glycoprotein</keyword>
<keyword id="KW-0393">Immunoglobulin domain</keyword>
<keyword id="KW-0472">Membrane</keyword>
<keyword id="KW-1185">Reference proteome</keyword>
<keyword id="KW-0732">Signal</keyword>
<keyword id="KW-0812">Transmembrane</keyword>
<keyword id="KW-1133">Transmembrane helix</keyword>
<evidence type="ECO:0000250" key="1"/>
<evidence type="ECO:0000255" key="2"/>
<evidence type="ECO:0000255" key="3">
    <source>
        <dbReference type="PROSITE-ProRule" id="PRU00114"/>
    </source>
</evidence>
<evidence type="ECO:0000269" key="4">
    <source>
    </source>
</evidence>
<evidence type="ECO:0000305" key="5"/>
<gene>
    <name type="primary">Skint10</name>
</gene>
<protein>
    <recommendedName>
        <fullName>Selection and upkeep of intraepithelial T-cells protein 10</fullName>
        <shortName>Skint-10</shortName>
    </recommendedName>
</protein>
<dbReference type="EMBL" id="EF494905">
    <property type="protein sequence ID" value="ABS30727.1"/>
    <property type="status" value="ALT_INIT"/>
    <property type="molecule type" value="mRNA"/>
</dbReference>
<dbReference type="EMBL" id="EF494906">
    <property type="protein sequence ID" value="ABS30728.1"/>
    <property type="status" value="ALT_INIT"/>
    <property type="molecule type" value="mRNA"/>
</dbReference>
<dbReference type="EMBL" id="AK037152">
    <property type="protein sequence ID" value="BAC29723.1"/>
    <property type="molecule type" value="mRNA"/>
</dbReference>
<dbReference type="EMBL" id="AL645508">
    <property type="status" value="NOT_ANNOTATED_CDS"/>
    <property type="molecule type" value="Genomic_DNA"/>
</dbReference>
<dbReference type="CCDS" id="CCDS38841.1"/>
<dbReference type="RefSeq" id="NP_808336.1">
    <property type="nucleotide sequence ID" value="NM_177668.2"/>
</dbReference>
<dbReference type="SMR" id="A7TZG1"/>
<dbReference type="FunCoup" id="A7TZG1">
    <property type="interactions" value="11"/>
</dbReference>
<dbReference type="STRING" id="10090.ENSMUSP00000058838"/>
<dbReference type="GlyCosmos" id="A7TZG1">
    <property type="glycosylation" value="1 site, No reported glycans"/>
</dbReference>
<dbReference type="GlyGen" id="A7TZG1">
    <property type="glycosylation" value="1 site"/>
</dbReference>
<dbReference type="PaxDb" id="10090-ENSMUSP00000058838"/>
<dbReference type="Ensembl" id="ENSMUST00000060327.4">
    <property type="protein sequence ID" value="ENSMUSP00000058838.4"/>
    <property type="gene ID" value="ENSMUSG00000048766.7"/>
</dbReference>
<dbReference type="GeneID" id="230613"/>
<dbReference type="KEGG" id="mmu:230613"/>
<dbReference type="UCSC" id="uc008udy.1">
    <property type="organism name" value="mouse"/>
</dbReference>
<dbReference type="AGR" id="MGI:2685416"/>
<dbReference type="CTD" id="230613"/>
<dbReference type="MGI" id="MGI:2685416">
    <property type="gene designation" value="Skint10"/>
</dbReference>
<dbReference type="VEuPathDB" id="HostDB:ENSMUSG00000048766"/>
<dbReference type="eggNOG" id="ENOG502THRH">
    <property type="taxonomic scope" value="Eukaryota"/>
</dbReference>
<dbReference type="GeneTree" id="ENSGT00940000165990"/>
<dbReference type="HOGENOM" id="CLU_871423_0_0_1"/>
<dbReference type="InParanoid" id="A7TZG1"/>
<dbReference type="OMA" id="LWDICIV"/>
<dbReference type="OrthoDB" id="9986391at2759"/>
<dbReference type="PhylomeDB" id="A7TZG1"/>
<dbReference type="TreeFam" id="TF339324"/>
<dbReference type="BioGRID-ORCS" id="230613">
    <property type="hits" value="1 hit in 75 CRISPR screens"/>
</dbReference>
<dbReference type="ChiTaRS" id="Skint10">
    <property type="organism name" value="mouse"/>
</dbReference>
<dbReference type="PRO" id="PR:A7TZG1"/>
<dbReference type="Proteomes" id="UP000000589">
    <property type="component" value="Chromosome 4"/>
</dbReference>
<dbReference type="RNAct" id="A7TZG1">
    <property type="molecule type" value="protein"/>
</dbReference>
<dbReference type="Bgee" id="ENSMUSG00000048766">
    <property type="expression patterns" value="Expressed in skin of external ear and 17 other cell types or tissues"/>
</dbReference>
<dbReference type="ExpressionAtlas" id="A7TZG1">
    <property type="expression patterns" value="baseline and differential"/>
</dbReference>
<dbReference type="GO" id="GO:0016020">
    <property type="term" value="C:membrane"/>
    <property type="evidence" value="ECO:0007669"/>
    <property type="project" value="UniProtKB-SubCell"/>
</dbReference>
<dbReference type="FunFam" id="2.60.40.10:FF:000088">
    <property type="entry name" value="Butyrophilin subfamily 1 member A1"/>
    <property type="match status" value="1"/>
</dbReference>
<dbReference type="Gene3D" id="2.60.40.10">
    <property type="entry name" value="Immunoglobulins"/>
    <property type="match status" value="1"/>
</dbReference>
<dbReference type="InterPro" id="IPR053896">
    <property type="entry name" value="BTN3A2-like_Ig-C"/>
</dbReference>
<dbReference type="InterPro" id="IPR007110">
    <property type="entry name" value="Ig-like_dom"/>
</dbReference>
<dbReference type="InterPro" id="IPR013783">
    <property type="entry name" value="Ig-like_fold"/>
</dbReference>
<dbReference type="InterPro" id="IPR050504">
    <property type="entry name" value="IgSF_BTN/MOG"/>
</dbReference>
<dbReference type="PANTHER" id="PTHR24100">
    <property type="entry name" value="BUTYROPHILIN"/>
    <property type="match status" value="1"/>
</dbReference>
<dbReference type="PANTHER" id="PTHR24100:SF148">
    <property type="entry name" value="SELECTION AND UPKEEP OF INTRAEPITHELIAL T-CELLS PROTEIN 10-RELATED"/>
    <property type="match status" value="1"/>
</dbReference>
<dbReference type="Pfam" id="PF22705">
    <property type="entry name" value="C2-set_3"/>
    <property type="match status" value="1"/>
</dbReference>
<dbReference type="PROSITE" id="PS50835">
    <property type="entry name" value="IG_LIKE"/>
    <property type="match status" value="1"/>
</dbReference>
<reference key="1">
    <citation type="journal article" date="2008" name="Nat. Genet.">
        <title>Skint1, the prototype of a newly identified immunoglobulin superfamily gene cluster, positively selects epidermal gammadelta T cells.</title>
        <authorList>
            <person name="Boyden L.M."/>
            <person name="Lewis J.M."/>
            <person name="Barbee S.D."/>
            <person name="Bas A."/>
            <person name="Girardi M."/>
            <person name="Hayday A.C."/>
            <person name="Tigelaar R.E."/>
            <person name="Lifton R.P."/>
        </authorList>
    </citation>
    <scope>NUCLEOTIDE SEQUENCE [MRNA]</scope>
    <scope>TISSUE SPECIFICITY</scope>
    <source>
        <strain>C57BL/6J</strain>
        <strain>FVB/NJ</strain>
    </source>
</reference>
<reference key="2">
    <citation type="journal article" date="2005" name="Science">
        <title>The transcriptional landscape of the mammalian genome.</title>
        <authorList>
            <person name="Carninci P."/>
            <person name="Kasukawa T."/>
            <person name="Katayama S."/>
            <person name="Gough J."/>
            <person name="Frith M.C."/>
            <person name="Maeda N."/>
            <person name="Oyama R."/>
            <person name="Ravasi T."/>
            <person name="Lenhard B."/>
            <person name="Wells C."/>
            <person name="Kodzius R."/>
            <person name="Shimokawa K."/>
            <person name="Bajic V.B."/>
            <person name="Brenner S.E."/>
            <person name="Batalov S."/>
            <person name="Forrest A.R."/>
            <person name="Zavolan M."/>
            <person name="Davis M.J."/>
            <person name="Wilming L.G."/>
            <person name="Aidinis V."/>
            <person name="Allen J.E."/>
            <person name="Ambesi-Impiombato A."/>
            <person name="Apweiler R."/>
            <person name="Aturaliya R.N."/>
            <person name="Bailey T.L."/>
            <person name="Bansal M."/>
            <person name="Baxter L."/>
            <person name="Beisel K.W."/>
            <person name="Bersano T."/>
            <person name="Bono H."/>
            <person name="Chalk A.M."/>
            <person name="Chiu K.P."/>
            <person name="Choudhary V."/>
            <person name="Christoffels A."/>
            <person name="Clutterbuck D.R."/>
            <person name="Crowe M.L."/>
            <person name="Dalla E."/>
            <person name="Dalrymple B.P."/>
            <person name="de Bono B."/>
            <person name="Della Gatta G."/>
            <person name="di Bernardo D."/>
            <person name="Down T."/>
            <person name="Engstrom P."/>
            <person name="Fagiolini M."/>
            <person name="Faulkner G."/>
            <person name="Fletcher C.F."/>
            <person name="Fukushima T."/>
            <person name="Furuno M."/>
            <person name="Futaki S."/>
            <person name="Gariboldi M."/>
            <person name="Georgii-Hemming P."/>
            <person name="Gingeras T.R."/>
            <person name="Gojobori T."/>
            <person name="Green R.E."/>
            <person name="Gustincich S."/>
            <person name="Harbers M."/>
            <person name="Hayashi Y."/>
            <person name="Hensch T.K."/>
            <person name="Hirokawa N."/>
            <person name="Hill D."/>
            <person name="Huminiecki L."/>
            <person name="Iacono M."/>
            <person name="Ikeo K."/>
            <person name="Iwama A."/>
            <person name="Ishikawa T."/>
            <person name="Jakt M."/>
            <person name="Kanapin A."/>
            <person name="Katoh M."/>
            <person name="Kawasawa Y."/>
            <person name="Kelso J."/>
            <person name="Kitamura H."/>
            <person name="Kitano H."/>
            <person name="Kollias G."/>
            <person name="Krishnan S.P."/>
            <person name="Kruger A."/>
            <person name="Kummerfeld S.K."/>
            <person name="Kurochkin I.V."/>
            <person name="Lareau L.F."/>
            <person name="Lazarevic D."/>
            <person name="Lipovich L."/>
            <person name="Liu J."/>
            <person name="Liuni S."/>
            <person name="McWilliam S."/>
            <person name="Madan Babu M."/>
            <person name="Madera M."/>
            <person name="Marchionni L."/>
            <person name="Matsuda H."/>
            <person name="Matsuzawa S."/>
            <person name="Miki H."/>
            <person name="Mignone F."/>
            <person name="Miyake S."/>
            <person name="Morris K."/>
            <person name="Mottagui-Tabar S."/>
            <person name="Mulder N."/>
            <person name="Nakano N."/>
            <person name="Nakauchi H."/>
            <person name="Ng P."/>
            <person name="Nilsson R."/>
            <person name="Nishiguchi S."/>
            <person name="Nishikawa S."/>
            <person name="Nori F."/>
            <person name="Ohara O."/>
            <person name="Okazaki Y."/>
            <person name="Orlando V."/>
            <person name="Pang K.C."/>
            <person name="Pavan W.J."/>
            <person name="Pavesi G."/>
            <person name="Pesole G."/>
            <person name="Petrovsky N."/>
            <person name="Piazza S."/>
            <person name="Reed J."/>
            <person name="Reid J.F."/>
            <person name="Ring B.Z."/>
            <person name="Ringwald M."/>
            <person name="Rost B."/>
            <person name="Ruan Y."/>
            <person name="Salzberg S.L."/>
            <person name="Sandelin A."/>
            <person name="Schneider C."/>
            <person name="Schoenbach C."/>
            <person name="Sekiguchi K."/>
            <person name="Semple C.A."/>
            <person name="Seno S."/>
            <person name="Sessa L."/>
            <person name="Sheng Y."/>
            <person name="Shibata Y."/>
            <person name="Shimada H."/>
            <person name="Shimada K."/>
            <person name="Silva D."/>
            <person name="Sinclair B."/>
            <person name="Sperling S."/>
            <person name="Stupka E."/>
            <person name="Sugiura K."/>
            <person name="Sultana R."/>
            <person name="Takenaka Y."/>
            <person name="Taki K."/>
            <person name="Tammoja K."/>
            <person name="Tan S.L."/>
            <person name="Tang S."/>
            <person name="Taylor M.S."/>
            <person name="Tegner J."/>
            <person name="Teichmann S.A."/>
            <person name="Ueda H.R."/>
            <person name="van Nimwegen E."/>
            <person name="Verardo R."/>
            <person name="Wei C.L."/>
            <person name="Yagi K."/>
            <person name="Yamanishi H."/>
            <person name="Zabarovsky E."/>
            <person name="Zhu S."/>
            <person name="Zimmer A."/>
            <person name="Hide W."/>
            <person name="Bult C."/>
            <person name="Grimmond S.M."/>
            <person name="Teasdale R.D."/>
            <person name="Liu E.T."/>
            <person name="Brusic V."/>
            <person name="Quackenbush J."/>
            <person name="Wahlestedt C."/>
            <person name="Mattick J.S."/>
            <person name="Hume D.A."/>
            <person name="Kai C."/>
            <person name="Sasaki D."/>
            <person name="Tomaru Y."/>
            <person name="Fukuda S."/>
            <person name="Kanamori-Katayama M."/>
            <person name="Suzuki M."/>
            <person name="Aoki J."/>
            <person name="Arakawa T."/>
            <person name="Iida J."/>
            <person name="Imamura K."/>
            <person name="Itoh M."/>
            <person name="Kato T."/>
            <person name="Kawaji H."/>
            <person name="Kawagashira N."/>
            <person name="Kawashima T."/>
            <person name="Kojima M."/>
            <person name="Kondo S."/>
            <person name="Konno H."/>
            <person name="Nakano K."/>
            <person name="Ninomiya N."/>
            <person name="Nishio T."/>
            <person name="Okada M."/>
            <person name="Plessy C."/>
            <person name="Shibata K."/>
            <person name="Shiraki T."/>
            <person name="Suzuki S."/>
            <person name="Tagami M."/>
            <person name="Waki K."/>
            <person name="Watahiki A."/>
            <person name="Okamura-Oho Y."/>
            <person name="Suzuki H."/>
            <person name="Kawai J."/>
            <person name="Hayashizaki Y."/>
        </authorList>
    </citation>
    <scope>NUCLEOTIDE SEQUENCE [LARGE SCALE MRNA]</scope>
    <source>
        <strain>C57BL/6J</strain>
        <tissue>Skin</tissue>
    </source>
</reference>
<reference key="3">
    <citation type="journal article" date="2009" name="PLoS Biol.">
        <title>Lineage-specific biology revealed by a finished genome assembly of the mouse.</title>
        <authorList>
            <person name="Church D.M."/>
            <person name="Goodstadt L."/>
            <person name="Hillier L.W."/>
            <person name="Zody M.C."/>
            <person name="Goldstein S."/>
            <person name="She X."/>
            <person name="Bult C.J."/>
            <person name="Agarwala R."/>
            <person name="Cherry J.L."/>
            <person name="DiCuccio M."/>
            <person name="Hlavina W."/>
            <person name="Kapustin Y."/>
            <person name="Meric P."/>
            <person name="Maglott D."/>
            <person name="Birtle Z."/>
            <person name="Marques A.C."/>
            <person name="Graves T."/>
            <person name="Zhou S."/>
            <person name="Teague B."/>
            <person name="Potamousis K."/>
            <person name="Churas C."/>
            <person name="Place M."/>
            <person name="Herschleb J."/>
            <person name="Runnheim R."/>
            <person name="Forrest D."/>
            <person name="Amos-Landgraf J."/>
            <person name="Schwartz D.C."/>
            <person name="Cheng Z."/>
            <person name="Lindblad-Toh K."/>
            <person name="Eichler E.E."/>
            <person name="Ponting C.P."/>
        </authorList>
    </citation>
    <scope>NUCLEOTIDE SEQUENCE [LARGE SCALE GENOMIC DNA]</scope>
    <source>
        <strain>C57BL/6J</strain>
    </source>
</reference>
<comment type="function">
    <text evidence="1">May act by engaging a cell surface molecule on immature T-cells in the embryonic thymus.</text>
</comment>
<comment type="subcellular location">
    <subcellularLocation>
        <location evidence="5">Membrane</location>
        <topology evidence="5">Multi-pass membrane protein</topology>
    </subcellularLocation>
</comment>
<comment type="tissue specificity">
    <text evidence="4">Expressed in skin and thymus.</text>
</comment>
<comment type="miscellaneous">
    <text>Encoded by one of the 11 copies of Skint genes clustered in the D1 region of the chromosome 4.</text>
</comment>
<comment type="similarity">
    <text evidence="5">Belongs to the SKINT family.</text>
</comment>
<comment type="sequence caution" evidence="5">
    <conflict type="erroneous initiation">
        <sequence resource="EMBL-CDS" id="ABS30727"/>
    </conflict>
    <text>Truncated N-terminus.</text>
</comment>
<comment type="sequence caution" evidence="5">
    <conflict type="erroneous initiation">
        <sequence resource="EMBL-CDS" id="ABS30728"/>
    </conflict>
    <text>Truncated N-terminus.</text>
</comment>
<sequence>MFLRTQMEQSQADIFALIKPHFGVMESSASYLPGFFMTFLLLQTTVLTQAMSLDIQINIQVPDTEGVLLECTSGSLIPPAEMTWRDSKGNIIPHSTTFDSQDRAGLLYLKSSILLKNRVQSPITCSIYNVTTNREKKRSVVLPDILFKSEYMSLMSNKFSCPLTYLFIIIFLNCLKGMLDFCCLKGKPVYFRELINKIKEVLNIKMRACCTLIWEFLLIVLYIAFLPFYLKFRSRASILDDAYPLHSNWLWDICIVLSVLMIFFTGLSLFLLWTLNCYGQMSYLPSMSMDLSKHDFEQNSSKSSEFQENYDVSCEIFLGTFEETIFSQHQESCIEDSFNPLQPLRLDCSLNWKT</sequence>
<proteinExistence type="evidence at transcript level"/>
<feature type="signal peptide" evidence="2">
    <location>
        <begin position="1"/>
        <end position="52"/>
    </location>
</feature>
<feature type="chain" id="PRO_5000270116" description="Selection and upkeep of intraepithelial T-cells protein 10">
    <location>
        <begin position="53"/>
        <end position="354"/>
    </location>
</feature>
<feature type="topological domain" description="Extracellular" evidence="2">
    <location>
        <begin position="53"/>
        <end position="158"/>
    </location>
</feature>
<feature type="transmembrane region" description="Helical" evidence="2">
    <location>
        <begin position="159"/>
        <end position="179"/>
    </location>
</feature>
<feature type="topological domain" description="Cytoplasmic" evidence="2">
    <location>
        <begin position="180"/>
        <end position="209"/>
    </location>
</feature>
<feature type="transmembrane region" description="Helical" evidence="2">
    <location>
        <begin position="210"/>
        <end position="230"/>
    </location>
</feature>
<feature type="topological domain" description="Extracellular" evidence="2">
    <location>
        <begin position="231"/>
        <end position="252"/>
    </location>
</feature>
<feature type="transmembrane region" description="Helical" evidence="2">
    <location>
        <begin position="253"/>
        <end position="273"/>
    </location>
</feature>
<feature type="topological domain" description="Cytoplasmic" evidence="2">
    <location>
        <begin position="274"/>
        <end position="354"/>
    </location>
</feature>
<feature type="domain" description="Ig-like V-type">
    <location>
        <begin position="53"/>
        <end position="141"/>
    </location>
</feature>
<feature type="glycosylation site" description="N-linked (GlcNAc...) asparagine" evidence="2">
    <location>
        <position position="129"/>
    </location>
</feature>
<feature type="disulfide bond" evidence="3">
    <location>
        <begin position="71"/>
        <end position="125"/>
    </location>
</feature>
<feature type="sequence conflict" description="In Ref. 1; ABS30728." evidence="5" ref="1">
    <original>S</original>
    <variation>P</variation>
    <location>
        <position position="27"/>
    </location>
</feature>
<feature type="sequence conflict" description="In Ref. 1; ABS30728." evidence="5" ref="1">
    <original>V</original>
    <variation>I</variation>
    <location>
        <position position="140"/>
    </location>
</feature>
<feature type="sequence conflict" description="In Ref. 1; ABS30728." evidence="5" ref="1">
    <original>E</original>
    <variation>K</variation>
    <location>
        <position position="193"/>
    </location>
</feature>
<feature type="sequence conflict" description="In Ref. 1; ABS30728." evidence="5" ref="1">
    <original>I</original>
    <variation>L</variation>
    <location>
        <position position="219"/>
    </location>
</feature>
<feature type="sequence conflict" description="In Ref. 1; ABS30728." evidence="5" ref="1">
    <original>F</original>
    <variation>S</variation>
    <location>
        <position position="296"/>
    </location>
</feature>
<feature type="sequence conflict" description="In Ref. 1; ABS30728." evidence="5" ref="1">
    <original>I</original>
    <variation>E</variation>
    <location>
        <position position="334"/>
    </location>
</feature>
<accession>A7TZG1</accession>
<accession>A7TZG2</accession>
<accession>Q8CAZ8</accession>
<organism>
    <name type="scientific">Mus musculus</name>
    <name type="common">Mouse</name>
    <dbReference type="NCBI Taxonomy" id="10090"/>
    <lineage>
        <taxon>Eukaryota</taxon>
        <taxon>Metazoa</taxon>
        <taxon>Chordata</taxon>
        <taxon>Craniata</taxon>
        <taxon>Vertebrata</taxon>
        <taxon>Euteleostomi</taxon>
        <taxon>Mammalia</taxon>
        <taxon>Eutheria</taxon>
        <taxon>Euarchontoglires</taxon>
        <taxon>Glires</taxon>
        <taxon>Rodentia</taxon>
        <taxon>Myomorpha</taxon>
        <taxon>Muroidea</taxon>
        <taxon>Muridae</taxon>
        <taxon>Murinae</taxon>
        <taxon>Mus</taxon>
        <taxon>Mus</taxon>
    </lineage>
</organism>